<feature type="chain" id="PRO_0000227202" description="Anthranilate phosphoribosyltransferase">
    <location>
        <begin position="1"/>
        <end position="366"/>
    </location>
</feature>
<feature type="region of interest" description="Disordered" evidence="2">
    <location>
        <begin position="342"/>
        <end position="366"/>
    </location>
</feature>
<feature type="compositionally biased region" description="Polar residues" evidence="2">
    <location>
        <begin position="345"/>
        <end position="359"/>
    </location>
</feature>
<feature type="binding site" evidence="1">
    <location>
        <position position="79"/>
    </location>
    <ligand>
        <name>5-phospho-alpha-D-ribose 1-diphosphate</name>
        <dbReference type="ChEBI" id="CHEBI:58017"/>
    </ligand>
</feature>
<feature type="binding site" evidence="1">
    <location>
        <position position="79"/>
    </location>
    <ligand>
        <name>anthranilate</name>
        <dbReference type="ChEBI" id="CHEBI:16567"/>
        <label>1</label>
    </ligand>
</feature>
<feature type="binding site" evidence="1">
    <location>
        <begin position="82"/>
        <end position="83"/>
    </location>
    <ligand>
        <name>5-phospho-alpha-D-ribose 1-diphosphate</name>
        <dbReference type="ChEBI" id="CHEBI:58017"/>
    </ligand>
</feature>
<feature type="binding site" evidence="1">
    <location>
        <position position="87"/>
    </location>
    <ligand>
        <name>5-phospho-alpha-D-ribose 1-diphosphate</name>
        <dbReference type="ChEBI" id="CHEBI:58017"/>
    </ligand>
</feature>
<feature type="binding site" evidence="1">
    <location>
        <begin position="89"/>
        <end position="92"/>
    </location>
    <ligand>
        <name>5-phospho-alpha-D-ribose 1-diphosphate</name>
        <dbReference type="ChEBI" id="CHEBI:58017"/>
    </ligand>
</feature>
<feature type="binding site" evidence="1">
    <location>
        <position position="91"/>
    </location>
    <ligand>
        <name>Mg(2+)</name>
        <dbReference type="ChEBI" id="CHEBI:18420"/>
        <label>1</label>
    </ligand>
</feature>
<feature type="binding site" evidence="1">
    <location>
        <begin position="107"/>
        <end position="115"/>
    </location>
    <ligand>
        <name>5-phospho-alpha-D-ribose 1-diphosphate</name>
        <dbReference type="ChEBI" id="CHEBI:58017"/>
    </ligand>
</feature>
<feature type="binding site" evidence="1">
    <location>
        <position position="110"/>
    </location>
    <ligand>
        <name>anthranilate</name>
        <dbReference type="ChEBI" id="CHEBI:16567"/>
        <label>1</label>
    </ligand>
</feature>
<feature type="binding site" evidence="1">
    <location>
        <position position="119"/>
    </location>
    <ligand>
        <name>5-phospho-alpha-D-ribose 1-diphosphate</name>
        <dbReference type="ChEBI" id="CHEBI:58017"/>
    </ligand>
</feature>
<feature type="binding site" evidence="1">
    <location>
        <position position="165"/>
    </location>
    <ligand>
        <name>anthranilate</name>
        <dbReference type="ChEBI" id="CHEBI:16567"/>
        <label>2</label>
    </ligand>
</feature>
<feature type="binding site" evidence="1">
    <location>
        <position position="223"/>
    </location>
    <ligand>
        <name>Mg(2+)</name>
        <dbReference type="ChEBI" id="CHEBI:18420"/>
        <label>2</label>
    </ligand>
</feature>
<feature type="binding site" evidence="1">
    <location>
        <position position="224"/>
    </location>
    <ligand>
        <name>Mg(2+)</name>
        <dbReference type="ChEBI" id="CHEBI:18420"/>
        <label>1</label>
    </ligand>
</feature>
<feature type="binding site" evidence="1">
    <location>
        <position position="224"/>
    </location>
    <ligand>
        <name>Mg(2+)</name>
        <dbReference type="ChEBI" id="CHEBI:18420"/>
        <label>2</label>
    </ligand>
</feature>
<evidence type="ECO:0000255" key="1">
    <source>
        <dbReference type="HAMAP-Rule" id="MF_00211"/>
    </source>
</evidence>
<evidence type="ECO:0000256" key="2">
    <source>
        <dbReference type="SAM" id="MobiDB-lite"/>
    </source>
</evidence>
<organism>
    <name type="scientific">Methanosarcina barkeri (strain Fusaro / DSM 804)</name>
    <dbReference type="NCBI Taxonomy" id="269797"/>
    <lineage>
        <taxon>Archaea</taxon>
        <taxon>Methanobacteriati</taxon>
        <taxon>Methanobacteriota</taxon>
        <taxon>Stenosarchaea group</taxon>
        <taxon>Methanomicrobia</taxon>
        <taxon>Methanosarcinales</taxon>
        <taxon>Methanosarcinaceae</taxon>
        <taxon>Methanosarcina</taxon>
    </lineage>
</organism>
<dbReference type="EC" id="2.4.2.18" evidence="1"/>
<dbReference type="EMBL" id="CP000099">
    <property type="protein sequence ID" value="AAZ72489.1"/>
    <property type="molecule type" value="Genomic_DNA"/>
</dbReference>
<dbReference type="SMR" id="Q465F3"/>
<dbReference type="STRING" id="269797.Mbar_A3624"/>
<dbReference type="PaxDb" id="269797-Mbar_A3624"/>
<dbReference type="KEGG" id="mba:Mbar_A3624"/>
<dbReference type="eggNOG" id="arCOG02012">
    <property type="taxonomic scope" value="Archaea"/>
</dbReference>
<dbReference type="HOGENOM" id="CLU_034315_2_1_2"/>
<dbReference type="OrthoDB" id="8214at2157"/>
<dbReference type="UniPathway" id="UPA00035">
    <property type="reaction ID" value="UER00041"/>
</dbReference>
<dbReference type="GO" id="GO:0005829">
    <property type="term" value="C:cytosol"/>
    <property type="evidence" value="ECO:0007669"/>
    <property type="project" value="TreeGrafter"/>
</dbReference>
<dbReference type="GO" id="GO:0004048">
    <property type="term" value="F:anthranilate phosphoribosyltransferase activity"/>
    <property type="evidence" value="ECO:0007669"/>
    <property type="project" value="UniProtKB-UniRule"/>
</dbReference>
<dbReference type="GO" id="GO:0000287">
    <property type="term" value="F:magnesium ion binding"/>
    <property type="evidence" value="ECO:0007669"/>
    <property type="project" value="UniProtKB-UniRule"/>
</dbReference>
<dbReference type="GO" id="GO:0000162">
    <property type="term" value="P:L-tryptophan biosynthetic process"/>
    <property type="evidence" value="ECO:0007669"/>
    <property type="project" value="UniProtKB-UniRule"/>
</dbReference>
<dbReference type="FunFam" id="3.40.1030.10:FF:000002">
    <property type="entry name" value="Anthranilate phosphoribosyltransferase"/>
    <property type="match status" value="1"/>
</dbReference>
<dbReference type="Gene3D" id="3.40.1030.10">
    <property type="entry name" value="Nucleoside phosphorylase/phosphoribosyltransferase catalytic domain"/>
    <property type="match status" value="1"/>
</dbReference>
<dbReference type="Gene3D" id="1.20.970.10">
    <property type="entry name" value="Transferase, Pyrimidine Nucleoside Phosphorylase, Chain C"/>
    <property type="match status" value="1"/>
</dbReference>
<dbReference type="HAMAP" id="MF_00211">
    <property type="entry name" value="TrpD"/>
    <property type="match status" value="1"/>
</dbReference>
<dbReference type="InterPro" id="IPR005940">
    <property type="entry name" value="Anthranilate_Pribosyl_Tfrase"/>
</dbReference>
<dbReference type="InterPro" id="IPR000312">
    <property type="entry name" value="Glycosyl_Trfase_fam3"/>
</dbReference>
<dbReference type="InterPro" id="IPR017459">
    <property type="entry name" value="Glycosyl_Trfase_fam3_N_dom"/>
</dbReference>
<dbReference type="InterPro" id="IPR036320">
    <property type="entry name" value="Glycosyl_Trfase_fam3_N_dom_sf"/>
</dbReference>
<dbReference type="InterPro" id="IPR035902">
    <property type="entry name" value="Nuc_phospho_transferase"/>
</dbReference>
<dbReference type="NCBIfam" id="TIGR01245">
    <property type="entry name" value="trpD"/>
    <property type="match status" value="1"/>
</dbReference>
<dbReference type="PANTHER" id="PTHR43285">
    <property type="entry name" value="ANTHRANILATE PHOSPHORIBOSYLTRANSFERASE"/>
    <property type="match status" value="1"/>
</dbReference>
<dbReference type="PANTHER" id="PTHR43285:SF2">
    <property type="entry name" value="ANTHRANILATE PHOSPHORIBOSYLTRANSFERASE"/>
    <property type="match status" value="1"/>
</dbReference>
<dbReference type="Pfam" id="PF02885">
    <property type="entry name" value="Glycos_trans_3N"/>
    <property type="match status" value="1"/>
</dbReference>
<dbReference type="Pfam" id="PF00591">
    <property type="entry name" value="Glycos_transf_3"/>
    <property type="match status" value="1"/>
</dbReference>
<dbReference type="SUPFAM" id="SSF52418">
    <property type="entry name" value="Nucleoside phosphorylase/phosphoribosyltransferase catalytic domain"/>
    <property type="match status" value="1"/>
</dbReference>
<dbReference type="SUPFAM" id="SSF47648">
    <property type="entry name" value="Nucleoside phosphorylase/phosphoribosyltransferase N-terminal domain"/>
    <property type="match status" value="1"/>
</dbReference>
<keyword id="KW-0028">Amino-acid biosynthesis</keyword>
<keyword id="KW-0057">Aromatic amino acid biosynthesis</keyword>
<keyword id="KW-0328">Glycosyltransferase</keyword>
<keyword id="KW-0460">Magnesium</keyword>
<keyword id="KW-0479">Metal-binding</keyword>
<keyword id="KW-0808">Transferase</keyword>
<keyword id="KW-0822">Tryptophan biosynthesis</keyword>
<sequence>MQRYIQRLEEGHDLSPEEAEDAVGKILSTAQDEEIGRFLLALRAKGEKPEEIAGFVRGMKKAGKTIRPKTSFRLVDTCGTGGDGLNTINISTAAAIVTAAAGVPVAKHGNRAATSMSGSSDVLDALGIKTDLEPEAVRQTIEEIGIGFMFAPVFHPAMKRVAGVRKKLGVRTVFNILGPLTNPAGTKGQVIGVFDKKLCEPIAYALAELGTEHALVVHGDGMDEITNTGETYVAELKDGKVSTYTLTPEALGMLRANPEDIKGGTPKENARDLLCIFKGQKGPKRDIVVMNAAAALYVGGIVGSIRQAIPIAEDAIDSGKVMVKFNQFKTFTSEFYRQKNKESLSGKSMSMRSRTSILSPASGERV</sequence>
<reference key="1">
    <citation type="journal article" date="2006" name="J. Bacteriol.">
        <title>The Methanosarcina barkeri genome: comparative analysis with Methanosarcina acetivorans and Methanosarcina mazei reveals extensive rearrangement within methanosarcinal genomes.</title>
        <authorList>
            <person name="Maeder D.L."/>
            <person name="Anderson I."/>
            <person name="Brettin T.S."/>
            <person name="Bruce D.C."/>
            <person name="Gilna P."/>
            <person name="Han C.S."/>
            <person name="Lapidus A."/>
            <person name="Metcalf W.W."/>
            <person name="Saunders E."/>
            <person name="Tapia R."/>
            <person name="Sowers K.R."/>
        </authorList>
    </citation>
    <scope>NUCLEOTIDE SEQUENCE [LARGE SCALE GENOMIC DNA]</scope>
    <source>
        <strain>Fusaro / DSM 804</strain>
    </source>
</reference>
<accession>Q465F3</accession>
<protein>
    <recommendedName>
        <fullName evidence="1">Anthranilate phosphoribosyltransferase</fullName>
        <ecNumber evidence="1">2.4.2.18</ecNumber>
    </recommendedName>
</protein>
<proteinExistence type="inferred from homology"/>
<name>TRPD_METBF</name>
<comment type="function">
    <text evidence="1">Catalyzes the transfer of the phosphoribosyl group of 5-phosphorylribose-1-pyrophosphate (PRPP) to anthranilate to yield N-(5'-phosphoribosyl)-anthranilate (PRA).</text>
</comment>
<comment type="catalytic activity">
    <reaction evidence="1">
        <text>N-(5-phospho-beta-D-ribosyl)anthranilate + diphosphate = 5-phospho-alpha-D-ribose 1-diphosphate + anthranilate</text>
        <dbReference type="Rhea" id="RHEA:11768"/>
        <dbReference type="ChEBI" id="CHEBI:16567"/>
        <dbReference type="ChEBI" id="CHEBI:18277"/>
        <dbReference type="ChEBI" id="CHEBI:33019"/>
        <dbReference type="ChEBI" id="CHEBI:58017"/>
        <dbReference type="EC" id="2.4.2.18"/>
    </reaction>
</comment>
<comment type="cofactor">
    <cofactor evidence="1">
        <name>Mg(2+)</name>
        <dbReference type="ChEBI" id="CHEBI:18420"/>
    </cofactor>
    <text evidence="1">Binds 2 magnesium ions per monomer.</text>
</comment>
<comment type="pathway">
    <text evidence="1">Amino-acid biosynthesis; L-tryptophan biosynthesis; L-tryptophan from chorismate: step 2/5.</text>
</comment>
<comment type="subunit">
    <text evidence="1">Homodimer.</text>
</comment>
<comment type="similarity">
    <text evidence="1">Belongs to the anthranilate phosphoribosyltransferase family.</text>
</comment>
<gene>
    <name evidence="1" type="primary">trpD</name>
    <name type="ordered locus">Mbar_A3624</name>
</gene>